<sequence>MACCLSEEAKEQKRINQEIEKQLRRDKRDARRELKLLLLGTGESGKSTFIKQMRIIHGSGYSEEDRKGFEKIVYQNIFSAIQTLIAAMETLSLEYKDPSNNEHAEFLNSIDADSADIFEDGHVTAIKGCWTDPGMQECYDRRREYQLTDSAKYYLDDVERIHEPGYIPTLQDILRVRVPTTGIIEYPFDLYSIIFRMVDVGGQRSERRKWIHCFENVTSIMFLVALSEYDQVLVESDNEENRMEESKALFRTIITYPWFQNSSVILFLNKKDLLEEKIMTSHLADYFPDYDGPKCDYEAAREFMMDSYMDLNEDKEKMLYYHYTCATDTENIRFVFAAVKDTILQLNLKEYNLV</sequence>
<reference key="1">
    <citation type="journal article" date="1993" name="Biochem. J.">
        <title>The molecular cloning of the squid (Loligo forbesi) visual Gq-alpha subunit and its expression in Saccharomyces cerevisiae.</title>
        <authorList>
            <person name="Ryba N.J.P."/>
            <person name="Findlay J.B.C."/>
            <person name="Reid J.D."/>
        </authorList>
    </citation>
    <scope>NUCLEOTIDE SEQUENCE [MRNA]</scope>
    <source>
        <tissue>Eye</tissue>
    </source>
</reference>
<reference key="2">
    <citation type="journal article" date="1991" name="Biochem. J.">
        <title>The identification and purification of the heterotrimeric GTP-binding protein from squid (Loligo forbesi) photoreceptors.</title>
        <authorList>
            <person name="Pottinger J.D.D."/>
            <person name="Ryba N.J.P."/>
            <person name="Keen J.N."/>
            <person name="Findlay J.B.C."/>
        </authorList>
    </citation>
    <scope>PROTEIN SEQUENCE OF 130-151 AND 258-278</scope>
    <scope>CHARACTERIZATION</scope>
</reference>
<keyword id="KW-0903">Direct protein sequencing</keyword>
<keyword id="KW-0342">GTP-binding</keyword>
<keyword id="KW-0449">Lipoprotein</keyword>
<keyword id="KW-0460">Magnesium</keyword>
<keyword id="KW-0479">Metal-binding</keyword>
<keyword id="KW-0547">Nucleotide-binding</keyword>
<keyword id="KW-0564">Palmitate</keyword>
<keyword id="KW-0807">Transducer</keyword>
<evidence type="ECO:0000250" key="1"/>
<evidence type="ECO:0000255" key="2"/>
<evidence type="ECO:0000255" key="3">
    <source>
        <dbReference type="PROSITE-ProRule" id="PRU01230"/>
    </source>
</evidence>
<evidence type="ECO:0000305" key="4"/>
<proteinExistence type="evidence at protein level"/>
<feature type="chain" id="PRO_0000203767" description="Guanine nucleotide-binding protein G(q) subunit alpha">
    <location>
        <begin position="1"/>
        <end position="354"/>
    </location>
</feature>
<feature type="domain" description="G-alpha" evidence="3">
    <location>
        <begin position="32"/>
        <end position="354"/>
    </location>
</feature>
<feature type="region of interest" description="G1 motif" evidence="3">
    <location>
        <begin position="35"/>
        <end position="48"/>
    </location>
</feature>
<feature type="region of interest" description="G2 motif" evidence="3">
    <location>
        <begin position="172"/>
        <end position="180"/>
    </location>
</feature>
<feature type="region of interest" description="G3 motif" evidence="3">
    <location>
        <begin position="195"/>
        <end position="204"/>
    </location>
</feature>
<feature type="region of interest" description="G4 motif" evidence="3">
    <location>
        <begin position="265"/>
        <end position="272"/>
    </location>
</feature>
<feature type="region of interest" description="G5 motif" evidence="3">
    <location>
        <begin position="324"/>
        <end position="329"/>
    </location>
</feature>
<feature type="binding site" evidence="1">
    <location>
        <begin position="40"/>
        <end position="47"/>
    </location>
    <ligand>
        <name>GTP</name>
        <dbReference type="ChEBI" id="CHEBI:37565"/>
    </ligand>
</feature>
<feature type="binding site" evidence="1">
    <location>
        <position position="47"/>
    </location>
    <ligand>
        <name>Mg(2+)</name>
        <dbReference type="ChEBI" id="CHEBI:18420"/>
    </ligand>
</feature>
<feature type="binding site" evidence="1">
    <location>
        <begin position="174"/>
        <end position="180"/>
    </location>
    <ligand>
        <name>GTP</name>
        <dbReference type="ChEBI" id="CHEBI:37565"/>
    </ligand>
</feature>
<feature type="binding site" evidence="1">
    <location>
        <position position="180"/>
    </location>
    <ligand>
        <name>Mg(2+)</name>
        <dbReference type="ChEBI" id="CHEBI:18420"/>
    </ligand>
</feature>
<feature type="binding site" evidence="1">
    <location>
        <begin position="199"/>
        <end position="203"/>
    </location>
    <ligand>
        <name>GTP</name>
        <dbReference type="ChEBI" id="CHEBI:37565"/>
    </ligand>
</feature>
<feature type="binding site" evidence="1">
    <location>
        <begin position="269"/>
        <end position="272"/>
    </location>
    <ligand>
        <name>GTP</name>
        <dbReference type="ChEBI" id="CHEBI:37565"/>
    </ligand>
</feature>
<feature type="binding site" evidence="1">
    <location>
        <position position="326"/>
    </location>
    <ligand>
        <name>GTP</name>
        <dbReference type="ChEBI" id="CHEBI:37565"/>
    </ligand>
</feature>
<feature type="lipid moiety-binding region" description="S-palmitoyl cysteine" evidence="2">
    <location>
        <position position="3"/>
    </location>
</feature>
<feature type="lipid moiety-binding region" description="S-palmitoyl cysteine" evidence="2">
    <location>
        <position position="4"/>
    </location>
</feature>
<accession>P38412</accession>
<comment type="function">
    <text>Guanine nucleotide-binding proteins (G proteins) are involved as modulators or transducers in various transmembrane signaling systems.</text>
</comment>
<comment type="function">
    <text>The G(q) alpha subunit is involved in the light-dependent activation of phospholipase C.</text>
</comment>
<comment type="subunit">
    <text>G proteins are composed of 3 units; alpha, beta and gamma. The alpha chain contains the guanine nucleotide binding site.</text>
</comment>
<comment type="tissue specificity">
    <text>A high concentration was found in the retinal light-sensitive outer segment.</text>
</comment>
<comment type="similarity">
    <text evidence="4">Belongs to the G-alpha family. G(q) subfamily.</text>
</comment>
<organism>
    <name type="scientific">Loligo forbesii</name>
    <name type="common">Veined squid</name>
    <dbReference type="NCBI Taxonomy" id="6618"/>
    <lineage>
        <taxon>Eukaryota</taxon>
        <taxon>Metazoa</taxon>
        <taxon>Spiralia</taxon>
        <taxon>Lophotrochozoa</taxon>
        <taxon>Mollusca</taxon>
        <taxon>Cephalopoda</taxon>
        <taxon>Coleoidea</taxon>
        <taxon>Decapodiformes</taxon>
        <taxon>Myopsida</taxon>
        <taxon>Loliginidae</taxon>
        <taxon>Loligo</taxon>
    </lineage>
</organism>
<dbReference type="EMBL" id="L10289">
    <property type="status" value="NOT_ANNOTATED_CDS"/>
    <property type="molecule type" value="mRNA"/>
</dbReference>
<dbReference type="PIR" id="S33309">
    <property type="entry name" value="S33309"/>
</dbReference>
<dbReference type="SMR" id="P38412"/>
<dbReference type="GO" id="GO:0005737">
    <property type="term" value="C:cytoplasm"/>
    <property type="evidence" value="ECO:0007669"/>
    <property type="project" value="TreeGrafter"/>
</dbReference>
<dbReference type="GO" id="GO:0005834">
    <property type="term" value="C:heterotrimeric G-protein complex"/>
    <property type="evidence" value="ECO:0007669"/>
    <property type="project" value="TreeGrafter"/>
</dbReference>
<dbReference type="GO" id="GO:0001664">
    <property type="term" value="F:G protein-coupled receptor binding"/>
    <property type="evidence" value="ECO:0007669"/>
    <property type="project" value="InterPro"/>
</dbReference>
<dbReference type="GO" id="GO:0031683">
    <property type="term" value="F:G-protein beta/gamma-subunit complex binding"/>
    <property type="evidence" value="ECO:0007669"/>
    <property type="project" value="InterPro"/>
</dbReference>
<dbReference type="GO" id="GO:0005525">
    <property type="term" value="F:GTP binding"/>
    <property type="evidence" value="ECO:0007669"/>
    <property type="project" value="UniProtKB-KW"/>
</dbReference>
<dbReference type="GO" id="GO:0003924">
    <property type="term" value="F:GTPase activity"/>
    <property type="evidence" value="ECO:0007669"/>
    <property type="project" value="InterPro"/>
</dbReference>
<dbReference type="GO" id="GO:0046872">
    <property type="term" value="F:metal ion binding"/>
    <property type="evidence" value="ECO:0007669"/>
    <property type="project" value="UniProtKB-KW"/>
</dbReference>
<dbReference type="GO" id="GO:0007188">
    <property type="term" value="P:adenylate cyclase-modulating G protein-coupled receptor signaling pathway"/>
    <property type="evidence" value="ECO:0007669"/>
    <property type="project" value="TreeGrafter"/>
</dbReference>
<dbReference type="CDD" id="cd00066">
    <property type="entry name" value="G-alpha"/>
    <property type="match status" value="1"/>
</dbReference>
<dbReference type="FunFam" id="3.40.50.300:FF:003977">
    <property type="entry name" value="Guanine nucleotide-binding protein G(q) subunit alpha"/>
    <property type="match status" value="1"/>
</dbReference>
<dbReference type="FunFam" id="1.10.400.10:FF:000002">
    <property type="entry name" value="guanine nucleotide-binding protein G(Q) subunit alpha"/>
    <property type="match status" value="1"/>
</dbReference>
<dbReference type="FunFam" id="3.40.50.300:FF:000692">
    <property type="entry name" value="Guanine nucleotide-binding protein subunit alpha"/>
    <property type="match status" value="1"/>
</dbReference>
<dbReference type="Gene3D" id="1.10.400.10">
    <property type="entry name" value="GI Alpha 1, domain 2-like"/>
    <property type="match status" value="1"/>
</dbReference>
<dbReference type="Gene3D" id="3.40.50.300">
    <property type="entry name" value="P-loop containing nucleotide triphosphate hydrolases"/>
    <property type="match status" value="1"/>
</dbReference>
<dbReference type="InterPro" id="IPR000654">
    <property type="entry name" value="Gprotein_alpha_Q"/>
</dbReference>
<dbReference type="InterPro" id="IPR001019">
    <property type="entry name" value="Gprotein_alpha_su"/>
</dbReference>
<dbReference type="InterPro" id="IPR011025">
    <property type="entry name" value="GproteinA_insert"/>
</dbReference>
<dbReference type="InterPro" id="IPR027417">
    <property type="entry name" value="P-loop_NTPase"/>
</dbReference>
<dbReference type="PANTHER" id="PTHR10218">
    <property type="entry name" value="GTP-BINDING PROTEIN ALPHA SUBUNIT"/>
    <property type="match status" value="1"/>
</dbReference>
<dbReference type="PANTHER" id="PTHR10218:SF329">
    <property type="entry name" value="GUANINE NUCLEOTIDE-BINDING PROTEIN G(Q) SUBUNIT ALPHA"/>
    <property type="match status" value="1"/>
</dbReference>
<dbReference type="Pfam" id="PF00503">
    <property type="entry name" value="G-alpha"/>
    <property type="match status" value="1"/>
</dbReference>
<dbReference type="PRINTS" id="PR00318">
    <property type="entry name" value="GPROTEINA"/>
</dbReference>
<dbReference type="PRINTS" id="PR00442">
    <property type="entry name" value="GPROTEINAQ"/>
</dbReference>
<dbReference type="SMART" id="SM00275">
    <property type="entry name" value="G_alpha"/>
    <property type="match status" value="1"/>
</dbReference>
<dbReference type="SUPFAM" id="SSF52540">
    <property type="entry name" value="P-loop containing nucleoside triphosphate hydrolases"/>
    <property type="match status" value="1"/>
</dbReference>
<dbReference type="SUPFAM" id="SSF47895">
    <property type="entry name" value="Transducin (alpha subunit), insertion domain"/>
    <property type="match status" value="1"/>
</dbReference>
<dbReference type="PROSITE" id="PS51882">
    <property type="entry name" value="G_ALPHA"/>
    <property type="match status" value="1"/>
</dbReference>
<protein>
    <recommendedName>
        <fullName>Guanine nucleotide-binding protein G(q) subunit alpha</fullName>
    </recommendedName>
    <alternativeName>
        <fullName>Guanine nucleotide-binding protein alpha-q</fullName>
    </alternativeName>
</protein>
<name>GNAQ_LOLFO</name>